<proteinExistence type="inferred from homology"/>
<dbReference type="EMBL" id="AY261366">
    <property type="status" value="NOT_ANNOTATED_CDS"/>
    <property type="molecule type" value="Genomic_DNA"/>
</dbReference>
<dbReference type="SMR" id="P0CA65"/>
<dbReference type="Proteomes" id="UP000000858">
    <property type="component" value="Segment"/>
</dbReference>
<dbReference type="GO" id="GO:0044167">
    <property type="term" value="C:host cell endoplasmic reticulum membrane"/>
    <property type="evidence" value="ECO:0007669"/>
    <property type="project" value="UniProtKB-SubCell"/>
</dbReference>
<dbReference type="GO" id="GO:0016020">
    <property type="term" value="C:membrane"/>
    <property type="evidence" value="ECO:0007669"/>
    <property type="project" value="UniProtKB-KW"/>
</dbReference>
<dbReference type="GO" id="GO:0030246">
    <property type="term" value="F:carbohydrate binding"/>
    <property type="evidence" value="ECO:0007669"/>
    <property type="project" value="UniProtKB-KW"/>
</dbReference>
<dbReference type="GO" id="GO:0052150">
    <property type="term" value="P:symbiont-mediated perturbation of host apoptosis"/>
    <property type="evidence" value="ECO:0007669"/>
    <property type="project" value="UniProtKB-KW"/>
</dbReference>
<dbReference type="Gene3D" id="3.10.100.10">
    <property type="entry name" value="Mannose-Binding Protein A, subunit A"/>
    <property type="match status" value="1"/>
</dbReference>
<dbReference type="InterPro" id="IPR016186">
    <property type="entry name" value="C-type_lectin-like/link_sf"/>
</dbReference>
<dbReference type="InterPro" id="IPR016187">
    <property type="entry name" value="CTDL_fold"/>
</dbReference>
<dbReference type="SUPFAM" id="SSF56436">
    <property type="entry name" value="C-type lectin-like"/>
    <property type="match status" value="1"/>
</dbReference>
<keyword id="KW-1015">Disulfide bond</keyword>
<keyword id="KW-0244">Early protein</keyword>
<keyword id="KW-0325">Glycoprotein</keyword>
<keyword id="KW-1038">Host endoplasmic reticulum</keyword>
<keyword id="KW-1043">Host membrane</keyword>
<keyword id="KW-0945">Host-virus interaction</keyword>
<keyword id="KW-0430">Lectin</keyword>
<keyword id="KW-0472">Membrane</keyword>
<keyword id="KW-1119">Modulation of host cell apoptosis by virus</keyword>
<keyword id="KW-0735">Signal-anchor</keyword>
<keyword id="KW-0812">Transmembrane</keyword>
<keyword id="KW-1133">Transmembrane helix</keyword>
<gene>
    <name type="ordered locus">War-067</name>
</gene>
<evidence type="ECO:0000250" key="1">
    <source>
        <dbReference type="UniProtKB" id="O89335"/>
    </source>
</evidence>
<evidence type="ECO:0000250" key="2">
    <source>
        <dbReference type="UniProtKB" id="Q65150"/>
    </source>
</evidence>
<evidence type="ECO:0000255" key="3"/>
<evidence type="ECO:0000305" key="4"/>
<accession>P0CA65</accession>
<name>EP153_ASFWA</name>
<organism>
    <name type="scientific">African swine fever virus (isolate Warthog/Namibia/Wart80/1980)</name>
    <name type="common">ASFV</name>
    <dbReference type="NCBI Taxonomy" id="561444"/>
    <lineage>
        <taxon>Viruses</taxon>
        <taxon>Varidnaviria</taxon>
        <taxon>Bamfordvirae</taxon>
        <taxon>Nucleocytoviricota</taxon>
        <taxon>Pokkesviricetes</taxon>
        <taxon>Asfuvirales</taxon>
        <taxon>Asfarviridae</taxon>
        <taxon>Asfivirus</taxon>
        <taxon>African swine fever virus</taxon>
    </lineage>
</organism>
<comment type="function">
    <text evidence="1 2">Down-regulates MHC-I expression by impairing the appropriate configuration or presentation into the plasma membrane of the latter (By similarity). Participates in viral hemadsorption, which may help viral spread (By similarity). Reduces the transactivating activity of host TP53, thus inhibiting apoptosis (By similarity). Non-essential for virus growth in swine macrophage cell cultures (By similarity).</text>
</comment>
<comment type="subunit">
    <text evidence="2">Homodimer.</text>
</comment>
<comment type="subcellular location">
    <subcellularLocation>
        <location evidence="2">Host endoplasmic reticulum membrane</location>
        <topology evidence="2">Single-pass type II membrane protein</topology>
    </subcellularLocation>
</comment>
<comment type="induction">
    <text evidence="2">Expressed in the early phase of the viral replicative cycle (By similarity). Expressed in the late phase of the viral replicative cycle (By similarity).</text>
</comment>
<comment type="similarity">
    <text evidence="4">Belongs to the asfivirus lectin-like protein family.</text>
</comment>
<organismHost>
    <name type="scientific">Ornithodoros</name>
    <name type="common">relapsing fever ticks</name>
    <dbReference type="NCBI Taxonomy" id="6937"/>
</organismHost>
<organismHost>
    <name type="scientific">Phacochoerus aethiopicus</name>
    <name type="common">Warthog</name>
    <dbReference type="NCBI Taxonomy" id="85517"/>
</organismHost>
<organismHost>
    <name type="scientific">Phacochoerus africanus</name>
    <name type="common">Warthog</name>
    <dbReference type="NCBI Taxonomy" id="41426"/>
</organismHost>
<organismHost>
    <name type="scientific">Potamochoerus larvatus</name>
    <name type="common">Bushpig</name>
    <dbReference type="NCBI Taxonomy" id="273792"/>
</organismHost>
<organismHost>
    <name type="scientific">Sus scrofa</name>
    <name type="common">Pig</name>
    <dbReference type="NCBI Taxonomy" id="9823"/>
</organismHost>
<reference key="1">
    <citation type="submission" date="2003-03" db="EMBL/GenBank/DDBJ databases">
        <title>African swine fever virus genomes.</title>
        <authorList>
            <person name="Kutish G.F."/>
            <person name="Rock D.L."/>
        </authorList>
    </citation>
    <scope>NUCLEOTIDE SEQUENCE [LARGE SCALE GENOMIC DNA]</scope>
</reference>
<protein>
    <recommendedName>
        <fullName>Lectin-like protein EP153R</fullName>
        <shortName>pEP153R</shortName>
    </recommendedName>
</protein>
<sequence length="163" mass="18979">MFSNKKYIGLINKKEGLKKKIDDYSILIIGILIGTNILSLIINIIGEINKPICYQNNDKIFYCPKDWVGYNNVCYYFSNDNGNNYTTADNKCKQLNNSTLANNLTDLLNLTSFLNLTKLYHHHSHYWVNYSLNNNYSVPLIDSKYNLNRKKSHYTDLLFICSK</sequence>
<feature type="chain" id="PRO_0000373542" description="Lectin-like protein EP153R">
    <location>
        <begin position="1"/>
        <end position="163"/>
    </location>
</feature>
<feature type="topological domain" description="Cytoplasmic" evidence="2">
    <location>
        <begin position="1"/>
        <end position="26"/>
    </location>
</feature>
<feature type="transmembrane region" description="Helical" evidence="3">
    <location>
        <begin position="27"/>
        <end position="47"/>
    </location>
</feature>
<feature type="topological domain" description="Extracellular" evidence="2">
    <location>
        <begin position="48"/>
        <end position="163"/>
    </location>
</feature>
<feature type="region of interest" description="Lectin-like">
    <location>
        <begin position="63"/>
        <end position="162"/>
    </location>
</feature>
<feature type="glycosylation site" description="N-linked (GlcNAc...) asparagine; by host" evidence="3">
    <location>
        <position position="84"/>
    </location>
</feature>
<feature type="glycosylation site" description="N-linked (GlcNAc...) asparagine; by host" evidence="3">
    <location>
        <position position="96"/>
    </location>
</feature>
<feature type="glycosylation site" description="N-linked (GlcNAc...) asparagine; by host" evidence="3">
    <location>
        <position position="97"/>
    </location>
</feature>
<feature type="glycosylation site" description="N-linked (GlcNAc...) asparagine; by host" evidence="3">
    <location>
        <position position="103"/>
    </location>
</feature>
<feature type="glycosylation site" description="N-linked (GlcNAc...) asparagine; by host" evidence="3">
    <location>
        <position position="109"/>
    </location>
</feature>
<feature type="glycosylation site" description="N-linked (GlcNAc...) asparagine; by host" evidence="3">
    <location>
        <position position="115"/>
    </location>
</feature>
<feature type="glycosylation site" description="N-linked (GlcNAc...) asparagine; by host" evidence="3">
    <location>
        <position position="129"/>
    </location>
</feature>
<feature type="glycosylation site" description="N-linked (GlcNAc...) asparagine; by host" evidence="3">
    <location>
        <position position="135"/>
    </location>
</feature>
<feature type="disulfide bond" evidence="2">
    <location>
        <begin position="63"/>
        <end position="74"/>
    </location>
</feature>
<feature type="disulfide bond" evidence="2">
    <location>
        <begin position="92"/>
        <end position="161"/>
    </location>
</feature>